<protein>
    <recommendedName>
        <fullName evidence="1">ATP synthase subunit alpha</fullName>
        <ecNumber evidence="1">7.1.2.2</ecNumber>
    </recommendedName>
    <alternativeName>
        <fullName evidence="1">ATP synthase F1 sector subunit alpha</fullName>
    </alternativeName>
    <alternativeName>
        <fullName evidence="1">F-ATPase subunit alpha</fullName>
    </alternativeName>
</protein>
<feature type="chain" id="PRO_1000055082" description="ATP synthase subunit alpha">
    <location>
        <begin position="1"/>
        <end position="513"/>
    </location>
</feature>
<feature type="binding site" evidence="1">
    <location>
        <begin position="169"/>
        <end position="176"/>
    </location>
    <ligand>
        <name>ATP</name>
        <dbReference type="ChEBI" id="CHEBI:30616"/>
    </ligand>
</feature>
<feature type="site" description="Required for activity" evidence="1">
    <location>
        <position position="373"/>
    </location>
</feature>
<organism>
    <name type="scientific">Shewanella putrefaciens (strain CN-32 / ATCC BAA-453)</name>
    <dbReference type="NCBI Taxonomy" id="319224"/>
    <lineage>
        <taxon>Bacteria</taxon>
        <taxon>Pseudomonadati</taxon>
        <taxon>Pseudomonadota</taxon>
        <taxon>Gammaproteobacteria</taxon>
        <taxon>Alteromonadales</taxon>
        <taxon>Shewanellaceae</taxon>
        <taxon>Shewanella</taxon>
    </lineage>
</organism>
<dbReference type="EC" id="7.1.2.2" evidence="1"/>
<dbReference type="EMBL" id="CP000681">
    <property type="protein sequence ID" value="ABP77663.1"/>
    <property type="molecule type" value="Genomic_DNA"/>
</dbReference>
<dbReference type="SMR" id="A4YCI0"/>
<dbReference type="STRING" id="319224.Sputcn32_3958"/>
<dbReference type="KEGG" id="spc:Sputcn32_3958"/>
<dbReference type="eggNOG" id="COG0056">
    <property type="taxonomic scope" value="Bacteria"/>
</dbReference>
<dbReference type="HOGENOM" id="CLU_010091_2_1_6"/>
<dbReference type="GO" id="GO:0005886">
    <property type="term" value="C:plasma membrane"/>
    <property type="evidence" value="ECO:0007669"/>
    <property type="project" value="UniProtKB-SubCell"/>
</dbReference>
<dbReference type="GO" id="GO:0045259">
    <property type="term" value="C:proton-transporting ATP synthase complex"/>
    <property type="evidence" value="ECO:0007669"/>
    <property type="project" value="UniProtKB-KW"/>
</dbReference>
<dbReference type="GO" id="GO:0043531">
    <property type="term" value="F:ADP binding"/>
    <property type="evidence" value="ECO:0007669"/>
    <property type="project" value="TreeGrafter"/>
</dbReference>
<dbReference type="GO" id="GO:0005524">
    <property type="term" value="F:ATP binding"/>
    <property type="evidence" value="ECO:0007669"/>
    <property type="project" value="UniProtKB-UniRule"/>
</dbReference>
<dbReference type="GO" id="GO:0046933">
    <property type="term" value="F:proton-transporting ATP synthase activity, rotational mechanism"/>
    <property type="evidence" value="ECO:0007669"/>
    <property type="project" value="UniProtKB-UniRule"/>
</dbReference>
<dbReference type="CDD" id="cd18113">
    <property type="entry name" value="ATP-synt_F1_alpha_C"/>
    <property type="match status" value="1"/>
</dbReference>
<dbReference type="CDD" id="cd18116">
    <property type="entry name" value="ATP-synt_F1_alpha_N"/>
    <property type="match status" value="1"/>
</dbReference>
<dbReference type="CDD" id="cd01132">
    <property type="entry name" value="F1-ATPase_alpha_CD"/>
    <property type="match status" value="1"/>
</dbReference>
<dbReference type="FunFam" id="1.20.150.20:FF:000001">
    <property type="entry name" value="ATP synthase subunit alpha"/>
    <property type="match status" value="1"/>
</dbReference>
<dbReference type="FunFam" id="2.40.30.20:FF:000001">
    <property type="entry name" value="ATP synthase subunit alpha"/>
    <property type="match status" value="1"/>
</dbReference>
<dbReference type="FunFam" id="3.40.50.300:FF:000002">
    <property type="entry name" value="ATP synthase subunit alpha"/>
    <property type="match status" value="1"/>
</dbReference>
<dbReference type="Gene3D" id="2.40.30.20">
    <property type="match status" value="1"/>
</dbReference>
<dbReference type="Gene3D" id="1.20.150.20">
    <property type="entry name" value="ATP synthase alpha/beta chain, C-terminal domain"/>
    <property type="match status" value="1"/>
</dbReference>
<dbReference type="Gene3D" id="3.40.50.300">
    <property type="entry name" value="P-loop containing nucleotide triphosphate hydrolases"/>
    <property type="match status" value="1"/>
</dbReference>
<dbReference type="HAMAP" id="MF_01346">
    <property type="entry name" value="ATP_synth_alpha_bact"/>
    <property type="match status" value="1"/>
</dbReference>
<dbReference type="InterPro" id="IPR023366">
    <property type="entry name" value="ATP_synth_asu-like_sf"/>
</dbReference>
<dbReference type="InterPro" id="IPR000793">
    <property type="entry name" value="ATP_synth_asu_C"/>
</dbReference>
<dbReference type="InterPro" id="IPR038376">
    <property type="entry name" value="ATP_synth_asu_C_sf"/>
</dbReference>
<dbReference type="InterPro" id="IPR033732">
    <property type="entry name" value="ATP_synth_F1_a_nt-bd_dom"/>
</dbReference>
<dbReference type="InterPro" id="IPR005294">
    <property type="entry name" value="ATP_synth_F1_asu"/>
</dbReference>
<dbReference type="InterPro" id="IPR020003">
    <property type="entry name" value="ATPase_a/bsu_AS"/>
</dbReference>
<dbReference type="InterPro" id="IPR004100">
    <property type="entry name" value="ATPase_F1/V1/A1_a/bsu_N"/>
</dbReference>
<dbReference type="InterPro" id="IPR036121">
    <property type="entry name" value="ATPase_F1/V1/A1_a/bsu_N_sf"/>
</dbReference>
<dbReference type="InterPro" id="IPR000194">
    <property type="entry name" value="ATPase_F1/V1/A1_a/bsu_nucl-bd"/>
</dbReference>
<dbReference type="InterPro" id="IPR027417">
    <property type="entry name" value="P-loop_NTPase"/>
</dbReference>
<dbReference type="NCBIfam" id="TIGR00962">
    <property type="entry name" value="atpA"/>
    <property type="match status" value="1"/>
</dbReference>
<dbReference type="NCBIfam" id="NF009884">
    <property type="entry name" value="PRK13343.1"/>
    <property type="match status" value="1"/>
</dbReference>
<dbReference type="PANTHER" id="PTHR48082">
    <property type="entry name" value="ATP SYNTHASE SUBUNIT ALPHA, MITOCHONDRIAL"/>
    <property type="match status" value="1"/>
</dbReference>
<dbReference type="PANTHER" id="PTHR48082:SF2">
    <property type="entry name" value="ATP SYNTHASE SUBUNIT ALPHA, MITOCHONDRIAL"/>
    <property type="match status" value="1"/>
</dbReference>
<dbReference type="Pfam" id="PF00006">
    <property type="entry name" value="ATP-synt_ab"/>
    <property type="match status" value="1"/>
</dbReference>
<dbReference type="Pfam" id="PF00306">
    <property type="entry name" value="ATP-synt_ab_C"/>
    <property type="match status" value="1"/>
</dbReference>
<dbReference type="Pfam" id="PF02874">
    <property type="entry name" value="ATP-synt_ab_N"/>
    <property type="match status" value="1"/>
</dbReference>
<dbReference type="SUPFAM" id="SSF47917">
    <property type="entry name" value="C-terminal domain of alpha and beta subunits of F1 ATP synthase"/>
    <property type="match status" value="1"/>
</dbReference>
<dbReference type="SUPFAM" id="SSF50615">
    <property type="entry name" value="N-terminal domain of alpha and beta subunits of F1 ATP synthase"/>
    <property type="match status" value="1"/>
</dbReference>
<dbReference type="SUPFAM" id="SSF52540">
    <property type="entry name" value="P-loop containing nucleoside triphosphate hydrolases"/>
    <property type="match status" value="1"/>
</dbReference>
<dbReference type="PROSITE" id="PS00152">
    <property type="entry name" value="ATPASE_ALPHA_BETA"/>
    <property type="match status" value="1"/>
</dbReference>
<comment type="function">
    <text evidence="1">Produces ATP from ADP in the presence of a proton gradient across the membrane. The alpha chain is a regulatory subunit.</text>
</comment>
<comment type="catalytic activity">
    <reaction evidence="1">
        <text>ATP + H2O + 4 H(+)(in) = ADP + phosphate + 5 H(+)(out)</text>
        <dbReference type="Rhea" id="RHEA:57720"/>
        <dbReference type="ChEBI" id="CHEBI:15377"/>
        <dbReference type="ChEBI" id="CHEBI:15378"/>
        <dbReference type="ChEBI" id="CHEBI:30616"/>
        <dbReference type="ChEBI" id="CHEBI:43474"/>
        <dbReference type="ChEBI" id="CHEBI:456216"/>
        <dbReference type="EC" id="7.1.2.2"/>
    </reaction>
</comment>
<comment type="subunit">
    <text evidence="1">F-type ATPases have 2 components, CF(1) - the catalytic core - and CF(0) - the membrane proton channel. CF(1) has five subunits: alpha(3), beta(3), gamma(1), delta(1), epsilon(1). CF(0) has three main subunits: a(1), b(2) and c(9-12). The alpha and beta chains form an alternating ring which encloses part of the gamma chain. CF(1) is attached to CF(0) by a central stalk formed by the gamma and epsilon chains, while a peripheral stalk is formed by the delta and b chains.</text>
</comment>
<comment type="subcellular location">
    <subcellularLocation>
        <location evidence="1">Cell inner membrane</location>
        <topology evidence="1">Peripheral membrane protein</topology>
    </subcellularLocation>
</comment>
<comment type="similarity">
    <text evidence="1">Belongs to the ATPase alpha/beta chains family.</text>
</comment>
<keyword id="KW-0066">ATP synthesis</keyword>
<keyword id="KW-0067">ATP-binding</keyword>
<keyword id="KW-0997">Cell inner membrane</keyword>
<keyword id="KW-1003">Cell membrane</keyword>
<keyword id="KW-0139">CF(1)</keyword>
<keyword id="KW-0375">Hydrogen ion transport</keyword>
<keyword id="KW-0406">Ion transport</keyword>
<keyword id="KW-0472">Membrane</keyword>
<keyword id="KW-0547">Nucleotide-binding</keyword>
<keyword id="KW-1278">Translocase</keyword>
<keyword id="KW-0813">Transport</keyword>
<name>ATPA_SHEPC</name>
<evidence type="ECO:0000255" key="1">
    <source>
        <dbReference type="HAMAP-Rule" id="MF_01346"/>
    </source>
</evidence>
<proteinExistence type="inferred from homology"/>
<gene>
    <name evidence="1" type="primary">atpA</name>
    <name type="ordered locus">Sputcn32_3958</name>
</gene>
<accession>A4YCI0</accession>
<sequence length="513" mass="55205">MQLNSTEISDLIKQRIEQFEVVSESRNEGTIVAVSDGIIRIHGLADVMQGEMIELPGNRFAIALNLERDSVGAVVMGPYADLAEGVKVKTTGRILEVPVGRGLLGRVVNTLGEPIDGKGPIDNDGFSPVEVIAPGVIERQSVSQPVQTGYKAVDAMIPIGRGQRELIIGDRQTGKTAMAIDAIINQKDSGIKCVYVAIGQKASTIANVVRKLEEHGALANTIVVVATASEAAALQFLAPYSGCSMGEYFRDRGEDALIVYDDLSKQAVAYRQISLLLKRPPGREAYPGDVFYLHSRLLERASRVNEIYVEKFTKGAVTGKTGSLTALPIIETQAGDVSAFVPTNVISITDGQIFLETDLFNSGLRPAVNPGISVSRVGGAAQTKIIKKLSGGIRTALAQYRELAAFSQFASDLDDATRAQLEHGVRVTELMKQKQYAPMSVAAQSVSIFAAEKGYLKSVELKKVGDFEAALLSFMNSEHAALMKLINETGDYNAEIEAELKAGLDKFVATQTW</sequence>
<reference key="1">
    <citation type="submission" date="2007-04" db="EMBL/GenBank/DDBJ databases">
        <title>Complete sequence of Shewanella putrefaciens CN-32.</title>
        <authorList>
            <consortium name="US DOE Joint Genome Institute"/>
            <person name="Copeland A."/>
            <person name="Lucas S."/>
            <person name="Lapidus A."/>
            <person name="Barry K."/>
            <person name="Detter J.C."/>
            <person name="Glavina del Rio T."/>
            <person name="Hammon N."/>
            <person name="Israni S."/>
            <person name="Dalin E."/>
            <person name="Tice H."/>
            <person name="Pitluck S."/>
            <person name="Chain P."/>
            <person name="Malfatti S."/>
            <person name="Shin M."/>
            <person name="Vergez L."/>
            <person name="Schmutz J."/>
            <person name="Larimer F."/>
            <person name="Land M."/>
            <person name="Hauser L."/>
            <person name="Kyrpides N."/>
            <person name="Mikhailova N."/>
            <person name="Romine M.F."/>
            <person name="Fredrickson J."/>
            <person name="Tiedje J."/>
            <person name="Richardson P."/>
        </authorList>
    </citation>
    <scope>NUCLEOTIDE SEQUENCE [LARGE SCALE GENOMIC DNA]</scope>
    <source>
        <strain>CN-32 / ATCC BAA-453</strain>
    </source>
</reference>